<reference key="1">
    <citation type="journal article" date="2006" name="J. Bacteriol.">
        <title>The genome sequence of the obligately chemolithoautotrophic, facultatively anaerobic bacterium Thiobacillus denitrificans.</title>
        <authorList>
            <person name="Beller H.R."/>
            <person name="Chain P.S."/>
            <person name="Letain T.E."/>
            <person name="Chakicherla A."/>
            <person name="Larimer F.W."/>
            <person name="Richardson P.M."/>
            <person name="Coleman M.A."/>
            <person name="Wood A.P."/>
            <person name="Kelly D.P."/>
        </authorList>
    </citation>
    <scope>NUCLEOTIDE SEQUENCE [LARGE SCALE GENOMIC DNA]</scope>
    <source>
        <strain>ATCC 25259 / T1</strain>
    </source>
</reference>
<evidence type="ECO:0000255" key="1">
    <source>
        <dbReference type="HAMAP-Rule" id="MF_00116"/>
    </source>
</evidence>
<organism>
    <name type="scientific">Thiobacillus denitrificans (strain ATCC 25259 / T1)</name>
    <dbReference type="NCBI Taxonomy" id="292415"/>
    <lineage>
        <taxon>Bacteria</taxon>
        <taxon>Pseudomonadati</taxon>
        <taxon>Pseudomonadota</taxon>
        <taxon>Betaproteobacteria</taxon>
        <taxon>Nitrosomonadales</taxon>
        <taxon>Thiobacillaceae</taxon>
        <taxon>Thiobacillus</taxon>
    </lineage>
</organism>
<protein>
    <recommendedName>
        <fullName evidence="1">Deoxyuridine 5'-triphosphate nucleotidohydrolase</fullName>
        <shortName evidence="1">dUTPase</shortName>
        <ecNumber evidence="1">3.6.1.23</ecNumber>
    </recommendedName>
    <alternativeName>
        <fullName evidence="1">dUTP pyrophosphatase</fullName>
    </alternativeName>
</protein>
<accession>Q3SFR7</accession>
<feature type="chain" id="PRO_0000231433" description="Deoxyuridine 5'-triphosphate nucleotidohydrolase">
    <location>
        <begin position="1"/>
        <end position="146"/>
    </location>
</feature>
<feature type="binding site" evidence="1">
    <location>
        <begin position="65"/>
        <end position="67"/>
    </location>
    <ligand>
        <name>substrate</name>
    </ligand>
</feature>
<feature type="binding site" evidence="1">
    <location>
        <position position="78"/>
    </location>
    <ligand>
        <name>substrate</name>
    </ligand>
</feature>
<feature type="binding site" evidence="1">
    <location>
        <begin position="82"/>
        <end position="84"/>
    </location>
    <ligand>
        <name>substrate</name>
    </ligand>
</feature>
<feature type="binding site" evidence="1">
    <location>
        <position position="92"/>
    </location>
    <ligand>
        <name>substrate</name>
    </ligand>
</feature>
<name>DUT_THIDA</name>
<keyword id="KW-0378">Hydrolase</keyword>
<keyword id="KW-0460">Magnesium</keyword>
<keyword id="KW-0479">Metal-binding</keyword>
<keyword id="KW-0546">Nucleotide metabolism</keyword>
<keyword id="KW-1185">Reference proteome</keyword>
<dbReference type="EC" id="3.6.1.23" evidence="1"/>
<dbReference type="EMBL" id="CP000116">
    <property type="protein sequence ID" value="AAZ98539.1"/>
    <property type="molecule type" value="Genomic_DNA"/>
</dbReference>
<dbReference type="RefSeq" id="WP_011313098.1">
    <property type="nucleotide sequence ID" value="NC_007404.1"/>
</dbReference>
<dbReference type="SMR" id="Q3SFR7"/>
<dbReference type="STRING" id="292415.Tbd_2586"/>
<dbReference type="KEGG" id="tbd:Tbd_2586"/>
<dbReference type="eggNOG" id="COG0756">
    <property type="taxonomic scope" value="Bacteria"/>
</dbReference>
<dbReference type="HOGENOM" id="CLU_068508_1_1_4"/>
<dbReference type="UniPathway" id="UPA00610">
    <property type="reaction ID" value="UER00666"/>
</dbReference>
<dbReference type="Proteomes" id="UP000008291">
    <property type="component" value="Chromosome"/>
</dbReference>
<dbReference type="GO" id="GO:0004170">
    <property type="term" value="F:dUTP diphosphatase activity"/>
    <property type="evidence" value="ECO:0007669"/>
    <property type="project" value="UniProtKB-UniRule"/>
</dbReference>
<dbReference type="GO" id="GO:0000287">
    <property type="term" value="F:magnesium ion binding"/>
    <property type="evidence" value="ECO:0007669"/>
    <property type="project" value="UniProtKB-UniRule"/>
</dbReference>
<dbReference type="GO" id="GO:0006226">
    <property type="term" value="P:dUMP biosynthetic process"/>
    <property type="evidence" value="ECO:0007669"/>
    <property type="project" value="UniProtKB-UniRule"/>
</dbReference>
<dbReference type="GO" id="GO:0046081">
    <property type="term" value="P:dUTP catabolic process"/>
    <property type="evidence" value="ECO:0007669"/>
    <property type="project" value="InterPro"/>
</dbReference>
<dbReference type="CDD" id="cd07557">
    <property type="entry name" value="trimeric_dUTPase"/>
    <property type="match status" value="1"/>
</dbReference>
<dbReference type="FunFam" id="2.70.40.10:FF:000002">
    <property type="entry name" value="dUTP diphosphatase"/>
    <property type="match status" value="1"/>
</dbReference>
<dbReference type="Gene3D" id="2.70.40.10">
    <property type="match status" value="1"/>
</dbReference>
<dbReference type="HAMAP" id="MF_00116">
    <property type="entry name" value="dUTPase_bact"/>
    <property type="match status" value="1"/>
</dbReference>
<dbReference type="InterPro" id="IPR008181">
    <property type="entry name" value="dUTPase"/>
</dbReference>
<dbReference type="InterPro" id="IPR029054">
    <property type="entry name" value="dUTPase-like"/>
</dbReference>
<dbReference type="InterPro" id="IPR036157">
    <property type="entry name" value="dUTPase-like_sf"/>
</dbReference>
<dbReference type="InterPro" id="IPR033704">
    <property type="entry name" value="dUTPase_trimeric"/>
</dbReference>
<dbReference type="NCBIfam" id="TIGR00576">
    <property type="entry name" value="dut"/>
    <property type="match status" value="1"/>
</dbReference>
<dbReference type="NCBIfam" id="NF001862">
    <property type="entry name" value="PRK00601.1"/>
    <property type="match status" value="1"/>
</dbReference>
<dbReference type="PANTHER" id="PTHR11241">
    <property type="entry name" value="DEOXYURIDINE 5'-TRIPHOSPHATE NUCLEOTIDOHYDROLASE"/>
    <property type="match status" value="1"/>
</dbReference>
<dbReference type="PANTHER" id="PTHR11241:SF0">
    <property type="entry name" value="DEOXYURIDINE 5'-TRIPHOSPHATE NUCLEOTIDOHYDROLASE"/>
    <property type="match status" value="1"/>
</dbReference>
<dbReference type="Pfam" id="PF00692">
    <property type="entry name" value="dUTPase"/>
    <property type="match status" value="1"/>
</dbReference>
<dbReference type="SUPFAM" id="SSF51283">
    <property type="entry name" value="dUTPase-like"/>
    <property type="match status" value="1"/>
</dbReference>
<sequence>MDVKILDARLRDQLPHYATPGAAGLDLRACIDAPITLAPGETRLVPTGMAIHLADPGYAALILPRSGLGHKHGIVLGNLVGLIDSDYQGQLMVSAWNRSEQSFELVPLERLAQLVIVPVVQARFNIVEAFETTARGEGGFGSTGRQ</sequence>
<comment type="function">
    <text evidence="1">This enzyme is involved in nucleotide metabolism: it produces dUMP, the immediate precursor of thymidine nucleotides and it decreases the intracellular concentration of dUTP so that uracil cannot be incorporated into DNA.</text>
</comment>
<comment type="catalytic activity">
    <reaction evidence="1">
        <text>dUTP + H2O = dUMP + diphosphate + H(+)</text>
        <dbReference type="Rhea" id="RHEA:10248"/>
        <dbReference type="ChEBI" id="CHEBI:15377"/>
        <dbReference type="ChEBI" id="CHEBI:15378"/>
        <dbReference type="ChEBI" id="CHEBI:33019"/>
        <dbReference type="ChEBI" id="CHEBI:61555"/>
        <dbReference type="ChEBI" id="CHEBI:246422"/>
        <dbReference type="EC" id="3.6.1.23"/>
    </reaction>
</comment>
<comment type="cofactor">
    <cofactor evidence="1">
        <name>Mg(2+)</name>
        <dbReference type="ChEBI" id="CHEBI:18420"/>
    </cofactor>
</comment>
<comment type="pathway">
    <text evidence="1">Pyrimidine metabolism; dUMP biosynthesis; dUMP from dCTP (dUTP route): step 2/2.</text>
</comment>
<comment type="similarity">
    <text evidence="1">Belongs to the dUTPase family.</text>
</comment>
<gene>
    <name evidence="1" type="primary">dut</name>
    <name type="ordered locus">Tbd_2586</name>
</gene>
<proteinExistence type="inferred from homology"/>